<name>ANMK_RHOE4</name>
<protein>
    <recommendedName>
        <fullName evidence="1">Anhydro-N-acetylmuramic acid kinase</fullName>
        <ecNumber evidence="1">2.7.1.170</ecNumber>
    </recommendedName>
    <alternativeName>
        <fullName evidence="1">AnhMurNAc kinase</fullName>
    </alternativeName>
</protein>
<evidence type="ECO:0000255" key="1">
    <source>
        <dbReference type="HAMAP-Rule" id="MF_01270"/>
    </source>
</evidence>
<feature type="chain" id="PRO_1000214173" description="Anhydro-N-acetylmuramic acid kinase">
    <location>
        <begin position="1"/>
        <end position="397"/>
    </location>
</feature>
<feature type="binding site" evidence="1">
    <location>
        <begin position="9"/>
        <end position="16"/>
    </location>
    <ligand>
        <name>ATP</name>
        <dbReference type="ChEBI" id="CHEBI:30616"/>
    </ligand>
</feature>
<proteinExistence type="inferred from homology"/>
<sequence>MRVIGLMSGTSYDAIDAAAADIRIDGDTLVLTPLGMVSEPYSGELRAAVAAAVPPASTTVGQICQLDTEIGQAFAAVAARANAELCGGSAELISSHGQTMFHWVEGAQVKGTLQLGQPAWIAEKTGCTVVSDLRSRDVATGGQGAPLVSAFDVLWLNGRTSGSVALNLGGIANVTAPGGGGTTADGPAVPIAFDTGPANALIDAAVSEFTAGEQWFDLGGALGAAGTPNVDLLAHLLSEPYYTQPAPKSTGKELFHRDYLLAALRGYESLSLADIVATLTALTARTVADSVKALAATEVVVSGGGTKNPTLMAMLRDELGDIALVSSDELGVTSDIKEALAFAVLGFLTAHGLPGSIASCTGARHASVLGSLTPGSRGLPRITSVPSAPKTMRIEAL</sequence>
<keyword id="KW-0067">ATP-binding</keyword>
<keyword id="KW-0119">Carbohydrate metabolism</keyword>
<keyword id="KW-0418">Kinase</keyword>
<keyword id="KW-0547">Nucleotide-binding</keyword>
<keyword id="KW-0808">Transferase</keyword>
<organism>
    <name type="scientific">Rhodococcus erythropolis (strain PR4 / NBRC 100887)</name>
    <dbReference type="NCBI Taxonomy" id="234621"/>
    <lineage>
        <taxon>Bacteria</taxon>
        <taxon>Bacillati</taxon>
        <taxon>Actinomycetota</taxon>
        <taxon>Actinomycetes</taxon>
        <taxon>Mycobacteriales</taxon>
        <taxon>Nocardiaceae</taxon>
        <taxon>Rhodococcus</taxon>
        <taxon>Rhodococcus erythropolis group</taxon>
    </lineage>
</organism>
<gene>
    <name evidence="1" type="primary">anmK</name>
    <name type="ordered locus">RER_12160</name>
</gene>
<accession>C0ZSV1</accession>
<reference key="1">
    <citation type="submission" date="2005-03" db="EMBL/GenBank/DDBJ databases">
        <title>Comparison of the complete genome sequences of Rhodococcus erythropolis PR4 and Rhodococcus opacus B4.</title>
        <authorList>
            <person name="Takarada H."/>
            <person name="Sekine M."/>
            <person name="Hosoyama A."/>
            <person name="Yamada R."/>
            <person name="Fujisawa T."/>
            <person name="Omata S."/>
            <person name="Shimizu A."/>
            <person name="Tsukatani N."/>
            <person name="Tanikawa S."/>
            <person name="Fujita N."/>
            <person name="Harayama S."/>
        </authorList>
    </citation>
    <scope>NUCLEOTIDE SEQUENCE [LARGE SCALE GENOMIC DNA]</scope>
    <source>
        <strain>PR4 / NBRC 100887</strain>
    </source>
</reference>
<comment type="function">
    <text evidence="1">Catalyzes the specific phosphorylation of 1,6-anhydro-N-acetylmuramic acid (anhMurNAc) with the simultaneous cleavage of the 1,6-anhydro ring, generating MurNAc-6-P. Is required for the utilization of anhMurNAc either imported from the medium or derived from its own cell wall murein, and thus plays a role in cell wall recycling.</text>
</comment>
<comment type="catalytic activity">
    <reaction evidence="1">
        <text>1,6-anhydro-N-acetyl-beta-muramate + ATP + H2O = N-acetyl-D-muramate 6-phosphate + ADP + H(+)</text>
        <dbReference type="Rhea" id="RHEA:24952"/>
        <dbReference type="ChEBI" id="CHEBI:15377"/>
        <dbReference type="ChEBI" id="CHEBI:15378"/>
        <dbReference type="ChEBI" id="CHEBI:30616"/>
        <dbReference type="ChEBI" id="CHEBI:58690"/>
        <dbReference type="ChEBI" id="CHEBI:58722"/>
        <dbReference type="ChEBI" id="CHEBI:456216"/>
        <dbReference type="EC" id="2.7.1.170"/>
    </reaction>
</comment>
<comment type="pathway">
    <text evidence="1">Amino-sugar metabolism; 1,6-anhydro-N-acetylmuramate degradation.</text>
</comment>
<comment type="pathway">
    <text evidence="1">Cell wall biogenesis; peptidoglycan recycling.</text>
</comment>
<comment type="similarity">
    <text evidence="1">Belongs to the anhydro-N-acetylmuramic acid kinase family.</text>
</comment>
<dbReference type="EC" id="2.7.1.170" evidence="1"/>
<dbReference type="EMBL" id="AP008957">
    <property type="protein sequence ID" value="BAH31924.1"/>
    <property type="molecule type" value="Genomic_DNA"/>
</dbReference>
<dbReference type="RefSeq" id="WP_020906499.1">
    <property type="nucleotide sequence ID" value="NC_012490.1"/>
</dbReference>
<dbReference type="SMR" id="C0ZSV1"/>
<dbReference type="KEGG" id="rer:RER_12160"/>
<dbReference type="eggNOG" id="COG2377">
    <property type="taxonomic scope" value="Bacteria"/>
</dbReference>
<dbReference type="HOGENOM" id="CLU_038782_1_0_11"/>
<dbReference type="UniPathway" id="UPA00343"/>
<dbReference type="UniPathway" id="UPA00544"/>
<dbReference type="Proteomes" id="UP000002204">
    <property type="component" value="Chromosome"/>
</dbReference>
<dbReference type="GO" id="GO:0005524">
    <property type="term" value="F:ATP binding"/>
    <property type="evidence" value="ECO:0007669"/>
    <property type="project" value="UniProtKB-UniRule"/>
</dbReference>
<dbReference type="GO" id="GO:0016301">
    <property type="term" value="F:kinase activity"/>
    <property type="evidence" value="ECO:0007669"/>
    <property type="project" value="UniProtKB-KW"/>
</dbReference>
<dbReference type="GO" id="GO:0016773">
    <property type="term" value="F:phosphotransferase activity, alcohol group as acceptor"/>
    <property type="evidence" value="ECO:0007669"/>
    <property type="project" value="UniProtKB-UniRule"/>
</dbReference>
<dbReference type="GO" id="GO:0097175">
    <property type="term" value="P:1,6-anhydro-N-acetyl-beta-muramic acid catabolic process"/>
    <property type="evidence" value="ECO:0007669"/>
    <property type="project" value="UniProtKB-UniRule"/>
</dbReference>
<dbReference type="GO" id="GO:0006040">
    <property type="term" value="P:amino sugar metabolic process"/>
    <property type="evidence" value="ECO:0007669"/>
    <property type="project" value="InterPro"/>
</dbReference>
<dbReference type="GO" id="GO:0009254">
    <property type="term" value="P:peptidoglycan turnover"/>
    <property type="evidence" value="ECO:0007669"/>
    <property type="project" value="UniProtKB-UniRule"/>
</dbReference>
<dbReference type="CDD" id="cd24050">
    <property type="entry name" value="ASKHA_NBD_ANMK"/>
    <property type="match status" value="1"/>
</dbReference>
<dbReference type="Gene3D" id="3.30.420.40">
    <property type="match status" value="2"/>
</dbReference>
<dbReference type="HAMAP" id="MF_01270">
    <property type="entry name" value="AnhMurNAc_kinase"/>
    <property type="match status" value="1"/>
</dbReference>
<dbReference type="InterPro" id="IPR005338">
    <property type="entry name" value="Anhydro_N_Ac-Mur_kinase"/>
</dbReference>
<dbReference type="InterPro" id="IPR043129">
    <property type="entry name" value="ATPase_NBD"/>
</dbReference>
<dbReference type="NCBIfam" id="NF007146">
    <property type="entry name" value="PRK09585.2-6"/>
    <property type="match status" value="1"/>
</dbReference>
<dbReference type="PANTHER" id="PTHR30605">
    <property type="entry name" value="ANHYDRO-N-ACETYLMURAMIC ACID KINASE"/>
    <property type="match status" value="1"/>
</dbReference>
<dbReference type="PANTHER" id="PTHR30605:SF0">
    <property type="entry name" value="ANHYDRO-N-ACETYLMURAMIC ACID KINASE"/>
    <property type="match status" value="1"/>
</dbReference>
<dbReference type="Pfam" id="PF03702">
    <property type="entry name" value="AnmK"/>
    <property type="match status" value="1"/>
</dbReference>
<dbReference type="SUPFAM" id="SSF53067">
    <property type="entry name" value="Actin-like ATPase domain"/>
    <property type="match status" value="1"/>
</dbReference>